<gene>
    <name type="primary">glo3</name>
    <name type="ORF">SPAC22E12.17c</name>
</gene>
<keyword id="KW-0333">Golgi apparatus</keyword>
<keyword id="KW-0343">GTPase activation</keyword>
<keyword id="KW-0479">Metal-binding</keyword>
<keyword id="KW-1185">Reference proteome</keyword>
<keyword id="KW-0862">Zinc</keyword>
<keyword id="KW-0863">Zinc-finger</keyword>
<accession>Q10367</accession>
<name>GLO3_SCHPO</name>
<organism>
    <name type="scientific">Schizosaccharomyces pombe (strain 972 / ATCC 24843)</name>
    <name type="common">Fission yeast</name>
    <dbReference type="NCBI Taxonomy" id="284812"/>
    <lineage>
        <taxon>Eukaryota</taxon>
        <taxon>Fungi</taxon>
        <taxon>Dikarya</taxon>
        <taxon>Ascomycota</taxon>
        <taxon>Taphrinomycotina</taxon>
        <taxon>Schizosaccharomycetes</taxon>
        <taxon>Schizosaccharomycetales</taxon>
        <taxon>Schizosaccharomycetaceae</taxon>
        <taxon>Schizosaccharomyces</taxon>
    </lineage>
</organism>
<protein>
    <recommendedName>
        <fullName>ADP-ribosylation factor GTPase-activating protein glo3</fullName>
        <shortName>ARF GAP glo3</shortName>
    </recommendedName>
</protein>
<comment type="function">
    <text evidence="1">GTPase-activating protein for the ADP ribosylation factor (ARF) family. Involved in retrograde vesicular transport from the Golgi to the endoplasmic reticulum (By similarity).</text>
</comment>
<comment type="subcellular location">
    <subcellularLocation>
        <location evidence="4">Golgi apparatus</location>
    </subcellularLocation>
</comment>
<dbReference type="EMBL" id="CU329670">
    <property type="protein sequence ID" value="CAA93904.2"/>
    <property type="molecule type" value="Genomic_DNA"/>
</dbReference>
<dbReference type="PIR" id="T38174">
    <property type="entry name" value="T38174"/>
</dbReference>
<dbReference type="RefSeq" id="NP_594843.2">
    <property type="nucleotide sequence ID" value="NM_001020272.2"/>
</dbReference>
<dbReference type="SMR" id="Q10367"/>
<dbReference type="BioGRID" id="278316">
    <property type="interactions" value="2"/>
</dbReference>
<dbReference type="FunCoup" id="Q10367">
    <property type="interactions" value="400"/>
</dbReference>
<dbReference type="STRING" id="284812.Q10367"/>
<dbReference type="iPTMnet" id="Q10367"/>
<dbReference type="PaxDb" id="4896-SPAC22E12.17c.1"/>
<dbReference type="EnsemblFungi" id="SPAC22E12.17c.1">
    <property type="protein sequence ID" value="SPAC22E12.17c.1:pep"/>
    <property type="gene ID" value="SPAC22E12.17c"/>
</dbReference>
<dbReference type="GeneID" id="2541825"/>
<dbReference type="KEGG" id="spo:2541825"/>
<dbReference type="PomBase" id="SPAC22E12.17c">
    <property type="gene designation" value="glo3"/>
</dbReference>
<dbReference type="VEuPathDB" id="FungiDB:SPAC22E12.17c"/>
<dbReference type="eggNOG" id="KOG0706">
    <property type="taxonomic scope" value="Eukaryota"/>
</dbReference>
<dbReference type="HOGENOM" id="CLU_023062_7_0_1"/>
<dbReference type="InParanoid" id="Q10367"/>
<dbReference type="OMA" id="PANQVCF"/>
<dbReference type="Reactome" id="R-SPO-6807878">
    <property type="pathway name" value="COPI-mediated anterograde transport"/>
</dbReference>
<dbReference type="Reactome" id="R-SPO-6811434">
    <property type="pathway name" value="COPI-dependent Golgi-to-ER retrograde traffic"/>
</dbReference>
<dbReference type="PRO" id="PR:Q10367"/>
<dbReference type="Proteomes" id="UP000002485">
    <property type="component" value="Chromosome I"/>
</dbReference>
<dbReference type="GO" id="GO:0030126">
    <property type="term" value="C:COPI vesicle coat"/>
    <property type="evidence" value="ECO:0000266"/>
    <property type="project" value="PomBase"/>
</dbReference>
<dbReference type="GO" id="GO:0005793">
    <property type="term" value="C:endoplasmic reticulum-Golgi intermediate compartment"/>
    <property type="evidence" value="ECO:0000266"/>
    <property type="project" value="PomBase"/>
</dbReference>
<dbReference type="GO" id="GO:0005794">
    <property type="term" value="C:Golgi apparatus"/>
    <property type="evidence" value="ECO:0007005"/>
    <property type="project" value="PomBase"/>
</dbReference>
<dbReference type="GO" id="GO:0000139">
    <property type="term" value="C:Golgi membrane"/>
    <property type="evidence" value="ECO:0007669"/>
    <property type="project" value="GOC"/>
</dbReference>
<dbReference type="GO" id="GO:0005096">
    <property type="term" value="F:GTPase activator activity"/>
    <property type="evidence" value="ECO:0000266"/>
    <property type="project" value="PomBase"/>
</dbReference>
<dbReference type="GO" id="GO:0008270">
    <property type="term" value="F:zinc ion binding"/>
    <property type="evidence" value="ECO:0007669"/>
    <property type="project" value="UniProtKB-KW"/>
</dbReference>
<dbReference type="GO" id="GO:0048205">
    <property type="term" value="P:COPI coating of Golgi vesicle"/>
    <property type="evidence" value="ECO:0000318"/>
    <property type="project" value="GO_Central"/>
</dbReference>
<dbReference type="GO" id="GO:0006888">
    <property type="term" value="P:endoplasmic reticulum to Golgi vesicle-mediated transport"/>
    <property type="evidence" value="ECO:0000266"/>
    <property type="project" value="PomBase"/>
</dbReference>
<dbReference type="GO" id="GO:0006886">
    <property type="term" value="P:intracellular protein transport"/>
    <property type="evidence" value="ECO:0000305"/>
    <property type="project" value="PomBase"/>
</dbReference>
<dbReference type="GO" id="GO:0006890">
    <property type="term" value="P:retrograde vesicle-mediated transport, Golgi to endoplasmic reticulum"/>
    <property type="evidence" value="ECO:0000266"/>
    <property type="project" value="PomBase"/>
</dbReference>
<dbReference type="CDD" id="cd08831">
    <property type="entry name" value="ArfGap_ArfGap2_3_like"/>
    <property type="match status" value="1"/>
</dbReference>
<dbReference type="FunFam" id="1.10.220.150:FF:000013">
    <property type="entry name" value="Putative Arf GTPase-activating protein"/>
    <property type="match status" value="1"/>
</dbReference>
<dbReference type="Gene3D" id="1.10.220.150">
    <property type="entry name" value="Arf GTPase activating protein"/>
    <property type="match status" value="1"/>
</dbReference>
<dbReference type="InterPro" id="IPR037278">
    <property type="entry name" value="ARFGAP/RecO"/>
</dbReference>
<dbReference type="InterPro" id="IPR001164">
    <property type="entry name" value="ArfGAP_dom"/>
</dbReference>
<dbReference type="InterPro" id="IPR038508">
    <property type="entry name" value="ArfGAP_dom_sf"/>
</dbReference>
<dbReference type="PANTHER" id="PTHR45686:SF4">
    <property type="entry name" value="ADP-RIBOSYLATION FACTOR GTPASE ACTIVATING PROTEIN 3, ISOFORM H"/>
    <property type="match status" value="1"/>
</dbReference>
<dbReference type="PANTHER" id="PTHR45686">
    <property type="entry name" value="ADP-RIBOSYLATION FACTOR GTPASE ACTIVATING PROTEIN 3, ISOFORM H-RELATED"/>
    <property type="match status" value="1"/>
</dbReference>
<dbReference type="Pfam" id="PF01412">
    <property type="entry name" value="ArfGap"/>
    <property type="match status" value="1"/>
</dbReference>
<dbReference type="PRINTS" id="PR00405">
    <property type="entry name" value="REVINTRACTNG"/>
</dbReference>
<dbReference type="SMART" id="SM00105">
    <property type="entry name" value="ArfGap"/>
    <property type="match status" value="1"/>
</dbReference>
<dbReference type="SUPFAM" id="SSF57863">
    <property type="entry name" value="ArfGap/RecO-like zinc finger"/>
    <property type="match status" value="1"/>
</dbReference>
<dbReference type="PROSITE" id="PS50115">
    <property type="entry name" value="ARFGAP"/>
    <property type="match status" value="1"/>
</dbReference>
<evidence type="ECO:0000250" key="1"/>
<evidence type="ECO:0000255" key="2">
    <source>
        <dbReference type="PROSITE-ProRule" id="PRU00288"/>
    </source>
</evidence>
<evidence type="ECO:0000256" key="3">
    <source>
        <dbReference type="SAM" id="MobiDB-lite"/>
    </source>
</evidence>
<evidence type="ECO:0000269" key="4">
    <source>
    </source>
</evidence>
<proteinExistence type="inferred from homology"/>
<reference key="1">
    <citation type="journal article" date="2002" name="Nature">
        <title>The genome sequence of Schizosaccharomyces pombe.</title>
        <authorList>
            <person name="Wood V."/>
            <person name="Gwilliam R."/>
            <person name="Rajandream M.A."/>
            <person name="Lyne M.H."/>
            <person name="Lyne R."/>
            <person name="Stewart A."/>
            <person name="Sgouros J.G."/>
            <person name="Peat N."/>
            <person name="Hayles J."/>
            <person name="Baker S.G."/>
            <person name="Basham D."/>
            <person name="Bowman S."/>
            <person name="Brooks K."/>
            <person name="Brown D."/>
            <person name="Brown S."/>
            <person name="Chillingworth T."/>
            <person name="Churcher C.M."/>
            <person name="Collins M."/>
            <person name="Connor R."/>
            <person name="Cronin A."/>
            <person name="Davis P."/>
            <person name="Feltwell T."/>
            <person name="Fraser A."/>
            <person name="Gentles S."/>
            <person name="Goble A."/>
            <person name="Hamlin N."/>
            <person name="Harris D.E."/>
            <person name="Hidalgo J."/>
            <person name="Hodgson G."/>
            <person name="Holroyd S."/>
            <person name="Hornsby T."/>
            <person name="Howarth S."/>
            <person name="Huckle E.J."/>
            <person name="Hunt S."/>
            <person name="Jagels K."/>
            <person name="James K.D."/>
            <person name="Jones L."/>
            <person name="Jones M."/>
            <person name="Leather S."/>
            <person name="McDonald S."/>
            <person name="McLean J."/>
            <person name="Mooney P."/>
            <person name="Moule S."/>
            <person name="Mungall K.L."/>
            <person name="Murphy L.D."/>
            <person name="Niblett D."/>
            <person name="Odell C."/>
            <person name="Oliver K."/>
            <person name="O'Neil S."/>
            <person name="Pearson D."/>
            <person name="Quail M.A."/>
            <person name="Rabbinowitsch E."/>
            <person name="Rutherford K.M."/>
            <person name="Rutter S."/>
            <person name="Saunders D."/>
            <person name="Seeger K."/>
            <person name="Sharp S."/>
            <person name="Skelton J."/>
            <person name="Simmonds M.N."/>
            <person name="Squares R."/>
            <person name="Squares S."/>
            <person name="Stevens K."/>
            <person name="Taylor K."/>
            <person name="Taylor R.G."/>
            <person name="Tivey A."/>
            <person name="Walsh S.V."/>
            <person name="Warren T."/>
            <person name="Whitehead S."/>
            <person name="Woodward J.R."/>
            <person name="Volckaert G."/>
            <person name="Aert R."/>
            <person name="Robben J."/>
            <person name="Grymonprez B."/>
            <person name="Weltjens I."/>
            <person name="Vanstreels E."/>
            <person name="Rieger M."/>
            <person name="Schaefer M."/>
            <person name="Mueller-Auer S."/>
            <person name="Gabel C."/>
            <person name="Fuchs M."/>
            <person name="Duesterhoeft A."/>
            <person name="Fritzc C."/>
            <person name="Holzer E."/>
            <person name="Moestl D."/>
            <person name="Hilbert H."/>
            <person name="Borzym K."/>
            <person name="Langer I."/>
            <person name="Beck A."/>
            <person name="Lehrach H."/>
            <person name="Reinhardt R."/>
            <person name="Pohl T.M."/>
            <person name="Eger P."/>
            <person name="Zimmermann W."/>
            <person name="Wedler H."/>
            <person name="Wambutt R."/>
            <person name="Purnelle B."/>
            <person name="Goffeau A."/>
            <person name="Cadieu E."/>
            <person name="Dreano S."/>
            <person name="Gloux S."/>
            <person name="Lelaure V."/>
            <person name="Mottier S."/>
            <person name="Galibert F."/>
            <person name="Aves S.J."/>
            <person name="Xiang Z."/>
            <person name="Hunt C."/>
            <person name="Moore K."/>
            <person name="Hurst S.M."/>
            <person name="Lucas M."/>
            <person name="Rochet M."/>
            <person name="Gaillardin C."/>
            <person name="Tallada V.A."/>
            <person name="Garzon A."/>
            <person name="Thode G."/>
            <person name="Daga R.R."/>
            <person name="Cruzado L."/>
            <person name="Jimenez J."/>
            <person name="Sanchez M."/>
            <person name="del Rey F."/>
            <person name="Benito J."/>
            <person name="Dominguez A."/>
            <person name="Revuelta J.L."/>
            <person name="Moreno S."/>
            <person name="Armstrong J."/>
            <person name="Forsburg S.L."/>
            <person name="Cerutti L."/>
            <person name="Lowe T."/>
            <person name="McCombie W.R."/>
            <person name="Paulsen I."/>
            <person name="Potashkin J."/>
            <person name="Shpakovski G.V."/>
            <person name="Ussery D."/>
            <person name="Barrell B.G."/>
            <person name="Nurse P."/>
        </authorList>
    </citation>
    <scope>NUCLEOTIDE SEQUENCE [LARGE SCALE GENOMIC DNA]</scope>
    <source>
        <strain>972 / ATCC 24843</strain>
    </source>
</reference>
<reference key="2">
    <citation type="journal article" date="2011" name="Science">
        <title>Comparative functional genomics of the fission yeasts.</title>
        <authorList>
            <person name="Rhind N."/>
            <person name="Chen Z."/>
            <person name="Yassour M."/>
            <person name="Thompson D.A."/>
            <person name="Haas B.J."/>
            <person name="Habib N."/>
            <person name="Wapinski I."/>
            <person name="Roy S."/>
            <person name="Lin M.F."/>
            <person name="Heiman D.I."/>
            <person name="Young S.K."/>
            <person name="Furuya K."/>
            <person name="Guo Y."/>
            <person name="Pidoux A."/>
            <person name="Chen H.M."/>
            <person name="Robbertse B."/>
            <person name="Goldberg J.M."/>
            <person name="Aoki K."/>
            <person name="Bayne E.H."/>
            <person name="Berlin A.M."/>
            <person name="Desjardins C.A."/>
            <person name="Dobbs E."/>
            <person name="Dukaj L."/>
            <person name="Fan L."/>
            <person name="FitzGerald M.G."/>
            <person name="French C."/>
            <person name="Gujja S."/>
            <person name="Hansen K."/>
            <person name="Keifenheim D."/>
            <person name="Levin J.Z."/>
            <person name="Mosher R.A."/>
            <person name="Mueller C.A."/>
            <person name="Pfiffner J."/>
            <person name="Priest M."/>
            <person name="Russ C."/>
            <person name="Smialowska A."/>
            <person name="Swoboda P."/>
            <person name="Sykes S.M."/>
            <person name="Vaughn M."/>
            <person name="Vengrova S."/>
            <person name="Yoder R."/>
            <person name="Zeng Q."/>
            <person name="Allshire R."/>
            <person name="Baulcombe D."/>
            <person name="Birren B.W."/>
            <person name="Brown W."/>
            <person name="Ekwall K."/>
            <person name="Kellis M."/>
            <person name="Leatherwood J."/>
            <person name="Levin H."/>
            <person name="Margalit H."/>
            <person name="Martienssen R."/>
            <person name="Nieduszynski C.A."/>
            <person name="Spatafora J.W."/>
            <person name="Friedman N."/>
            <person name="Dalgaard J.Z."/>
            <person name="Baumann P."/>
            <person name="Niki H."/>
            <person name="Regev A."/>
            <person name="Nusbaum C."/>
        </authorList>
    </citation>
    <scope>REVISION OF GENE MODEL</scope>
</reference>
<reference key="3">
    <citation type="journal article" date="2006" name="Nat. Biotechnol.">
        <title>ORFeome cloning and global analysis of protein localization in the fission yeast Schizosaccharomyces pombe.</title>
        <authorList>
            <person name="Matsuyama A."/>
            <person name="Arai R."/>
            <person name="Yashiroda Y."/>
            <person name="Shirai A."/>
            <person name="Kamata A."/>
            <person name="Sekido S."/>
            <person name="Kobayashi Y."/>
            <person name="Hashimoto A."/>
            <person name="Hamamoto M."/>
            <person name="Hiraoka Y."/>
            <person name="Horinouchi S."/>
            <person name="Yoshida M."/>
        </authorList>
    </citation>
    <scope>SUBCELLULAR LOCATION [LARGE SCALE ANALYSIS]</scope>
</reference>
<sequence length="483" mass="52584">MTATKEESQKLLTSLRSQRDNKVCFDCGAKNPTWSSTTFGIYLCLDCSAAHRNMGVHISFVRSTVLDSWTYAQLRVMRVGGNENARNYFKRHGGVSLLNSKDCRLKYSSKTAKQYLEKLKSLAVEDEANYPDILDMDFLSNTHEGSSAADTTNEDDDFFSAWDKASVKKSDDNLDDKTDLASTSSSVVVESGEKDEPVVVTEEKTMVSPPSRPDSTSTTKSKTSSISSARARPIRASSRPTASKLGASRPQKLGIKKANADIDFDEFEKAVLSSESAPTKKPAAVASKESTVDTLVDNGVEEVKESTSTTVQGKPVKPVLKSAASAKSTKSDDSNLNANFARLGFGQFAAASNARAKAAAKARELKKNEVNAPTYARDHFASQKSISSDQYFGRGSFDPEAAAEAQERLSSFRDATAISSKSYFGEEEDENEEGESSHRPDSAYLRDIAETATEDIEAIKVAIHQGAEKLSDFIQKVGARYNF</sequence>
<feature type="chain" id="PRO_0000074229" description="ADP-ribosylation factor GTPase-activating protein glo3">
    <location>
        <begin position="1"/>
        <end position="483"/>
    </location>
</feature>
<feature type="domain" description="Arf-GAP" evidence="2">
    <location>
        <begin position="9"/>
        <end position="128"/>
    </location>
</feature>
<feature type="zinc finger region" description="C4-type" evidence="2">
    <location>
        <begin position="24"/>
        <end position="47"/>
    </location>
</feature>
<feature type="region of interest" description="Disordered" evidence="3">
    <location>
        <begin position="169"/>
        <end position="250"/>
    </location>
</feature>
<feature type="region of interest" description="Disordered" evidence="3">
    <location>
        <begin position="420"/>
        <end position="445"/>
    </location>
</feature>
<feature type="compositionally biased region" description="Basic and acidic residues" evidence="3">
    <location>
        <begin position="169"/>
        <end position="179"/>
    </location>
</feature>
<feature type="compositionally biased region" description="Basic and acidic residues" evidence="3">
    <location>
        <begin position="191"/>
        <end position="205"/>
    </location>
</feature>
<feature type="compositionally biased region" description="Low complexity" evidence="3">
    <location>
        <begin position="213"/>
        <end position="243"/>
    </location>
</feature>
<feature type="compositionally biased region" description="Acidic residues" evidence="3">
    <location>
        <begin position="425"/>
        <end position="434"/>
    </location>
</feature>